<reference key="1">
    <citation type="journal article" date="1999" name="Nature">
        <title>Evidence for lateral gene transfer between Archaea and Bacteria from genome sequence of Thermotoga maritima.</title>
        <authorList>
            <person name="Nelson K.E."/>
            <person name="Clayton R.A."/>
            <person name="Gill S.R."/>
            <person name="Gwinn M.L."/>
            <person name="Dodson R.J."/>
            <person name="Haft D.H."/>
            <person name="Hickey E.K."/>
            <person name="Peterson J.D."/>
            <person name="Nelson W.C."/>
            <person name="Ketchum K.A."/>
            <person name="McDonald L.A."/>
            <person name="Utterback T.R."/>
            <person name="Malek J.A."/>
            <person name="Linher K.D."/>
            <person name="Garrett M.M."/>
            <person name="Stewart A.M."/>
            <person name="Cotton M.D."/>
            <person name="Pratt M.S."/>
            <person name="Phillips C.A."/>
            <person name="Richardson D.L."/>
            <person name="Heidelberg J.F."/>
            <person name="Sutton G.G."/>
            <person name="Fleischmann R.D."/>
            <person name="Eisen J.A."/>
            <person name="White O."/>
            <person name="Salzberg S.L."/>
            <person name="Smith H.O."/>
            <person name="Venter J.C."/>
            <person name="Fraser C.M."/>
        </authorList>
    </citation>
    <scope>NUCLEOTIDE SEQUENCE [LARGE SCALE GENOMIC DNA]</scope>
    <source>
        <strain>ATCC 43589 / DSM 3109 / JCM 10099 / NBRC 100826 / MSB8</strain>
    </source>
</reference>
<sequence>MFDKQEFVSKLVTEEKAKIVLLVMDGLGDIPVNGKTPLQAANTPNLDNLAKESDLGQTIPVLPGITPGSGPGHLSLFGYDPIKYQIGRGILEALGIGVEVGEKDVVARANFATWDGKVVLDRRAGRPATEESAKVVQLLSEKIKKIEDVEITFYPGKEHRFVVKFTGEGLGDKVTDADPQKEGHPMVWAEGLDEPSKKTARIVNELIKKIAEVLKDNPKINFALIRGFSKYPDLPKFPQVYKMKAGAIATYPMYRGLAKLVGMEIIETGQTVADEIKTLKEKWNDYDFFYVHVKKTDSYGEDGKFEEKVKVIEEVDAIIPEIVSLNPDVLVITGDHSTPVPLKAHSWHPVPLLIWSKYTRRGLSQAFNEFECARGTLGTIHASDVMTLALAYAGKLEKFGA</sequence>
<protein>
    <recommendedName>
        <fullName evidence="1">Probable 2,3-bisphosphoglycerate-independent phosphoglycerate mutase</fullName>
        <shortName evidence="1">BPG-independent PGAM</shortName>
        <shortName evidence="1">Phosphoglyceromutase</shortName>
        <shortName evidence="1">aPGAM</shortName>
        <ecNumber evidence="1">5.4.2.12</ecNumber>
    </recommendedName>
</protein>
<dbReference type="EC" id="5.4.2.12" evidence="1"/>
<dbReference type="EMBL" id="AE000512">
    <property type="protein sequence ID" value="AAD36837.1"/>
    <property type="molecule type" value="Genomic_DNA"/>
</dbReference>
<dbReference type="PIR" id="E72213">
    <property type="entry name" value="E72213"/>
</dbReference>
<dbReference type="RefSeq" id="NP_229571.1">
    <property type="nucleotide sequence ID" value="NC_000853.1"/>
</dbReference>
<dbReference type="RefSeq" id="WP_004082320.1">
    <property type="nucleotide sequence ID" value="NC_000853.1"/>
</dbReference>
<dbReference type="SMR" id="Q9X295"/>
<dbReference type="STRING" id="243274.TM_1774"/>
<dbReference type="PaxDb" id="243274-THEMA_05355"/>
<dbReference type="EnsemblBacteria" id="AAD36837">
    <property type="protein sequence ID" value="AAD36837"/>
    <property type="gene ID" value="TM_1774"/>
</dbReference>
<dbReference type="KEGG" id="tma:TM1774"/>
<dbReference type="KEGG" id="tmi:THEMA_05355"/>
<dbReference type="KEGG" id="tmm:Tmari_1783"/>
<dbReference type="KEGG" id="tmw:THMA_1818"/>
<dbReference type="eggNOG" id="COG3635">
    <property type="taxonomic scope" value="Bacteria"/>
</dbReference>
<dbReference type="InParanoid" id="Q9X295"/>
<dbReference type="OrthoDB" id="9804453at2"/>
<dbReference type="BioCyc" id="MetaCyc:MONOMER-402"/>
<dbReference type="UniPathway" id="UPA00109">
    <property type="reaction ID" value="UER00186"/>
</dbReference>
<dbReference type="Proteomes" id="UP000008183">
    <property type="component" value="Chromosome"/>
</dbReference>
<dbReference type="GO" id="GO:0046872">
    <property type="term" value="F:metal ion binding"/>
    <property type="evidence" value="ECO:0007669"/>
    <property type="project" value="InterPro"/>
</dbReference>
<dbReference type="GO" id="GO:0004619">
    <property type="term" value="F:phosphoglycerate mutase activity"/>
    <property type="evidence" value="ECO:0007669"/>
    <property type="project" value="UniProtKB-EC"/>
</dbReference>
<dbReference type="GO" id="GO:0006096">
    <property type="term" value="P:glycolytic process"/>
    <property type="evidence" value="ECO:0007669"/>
    <property type="project" value="UniProtKB-UniRule"/>
</dbReference>
<dbReference type="CDD" id="cd16011">
    <property type="entry name" value="iPGM_like"/>
    <property type="match status" value="1"/>
</dbReference>
<dbReference type="Gene3D" id="3.40.720.10">
    <property type="entry name" value="Alkaline Phosphatase, subunit A"/>
    <property type="match status" value="2"/>
</dbReference>
<dbReference type="HAMAP" id="MF_01402_B">
    <property type="entry name" value="ApgM_B"/>
    <property type="match status" value="1"/>
</dbReference>
<dbReference type="InterPro" id="IPR017850">
    <property type="entry name" value="Alkaline_phosphatase_core_sf"/>
</dbReference>
<dbReference type="InterPro" id="IPR023665">
    <property type="entry name" value="ApgAM_prokaryotes"/>
</dbReference>
<dbReference type="InterPro" id="IPR006124">
    <property type="entry name" value="Metalloenzyme"/>
</dbReference>
<dbReference type="InterPro" id="IPR004456">
    <property type="entry name" value="Pglycerate_mutase_ApgM"/>
</dbReference>
<dbReference type="NCBIfam" id="TIGR00306">
    <property type="entry name" value="apgM"/>
    <property type="match status" value="1"/>
</dbReference>
<dbReference type="NCBIfam" id="NF003160">
    <property type="entry name" value="PRK04135.1"/>
    <property type="match status" value="1"/>
</dbReference>
<dbReference type="PANTHER" id="PTHR31209">
    <property type="entry name" value="COFACTOR-INDEPENDENT PHOSPHOGLYCERATE MUTASE"/>
    <property type="match status" value="1"/>
</dbReference>
<dbReference type="PANTHER" id="PTHR31209:SF0">
    <property type="entry name" value="METALLOENZYME DOMAIN-CONTAINING PROTEIN"/>
    <property type="match status" value="1"/>
</dbReference>
<dbReference type="Pfam" id="PF01676">
    <property type="entry name" value="Metalloenzyme"/>
    <property type="match status" value="1"/>
</dbReference>
<dbReference type="Pfam" id="PF10143">
    <property type="entry name" value="PhosphMutase"/>
    <property type="match status" value="1"/>
</dbReference>
<dbReference type="PIRSF" id="PIRSF006392">
    <property type="entry name" value="IPGAM_arch"/>
    <property type="match status" value="1"/>
</dbReference>
<dbReference type="SUPFAM" id="SSF53649">
    <property type="entry name" value="Alkaline phosphatase-like"/>
    <property type="match status" value="1"/>
</dbReference>
<name>APGM_THEMA</name>
<comment type="function">
    <text evidence="1">Catalyzes the interconversion of 2-phosphoglycerate and 3-phosphoglycerate.</text>
</comment>
<comment type="catalytic activity">
    <reaction evidence="1">
        <text>(2R)-2-phosphoglycerate = (2R)-3-phosphoglycerate</text>
        <dbReference type="Rhea" id="RHEA:15901"/>
        <dbReference type="ChEBI" id="CHEBI:58272"/>
        <dbReference type="ChEBI" id="CHEBI:58289"/>
        <dbReference type="EC" id="5.4.2.12"/>
    </reaction>
</comment>
<comment type="pathway">
    <text evidence="1">Carbohydrate degradation; glycolysis; pyruvate from D-glyceraldehyde 3-phosphate: step 3/5.</text>
</comment>
<comment type="similarity">
    <text evidence="1">Belongs to the BPG-independent phosphoglycerate mutase family. A-PGAM subfamily.</text>
</comment>
<organism>
    <name type="scientific">Thermotoga maritima (strain ATCC 43589 / DSM 3109 / JCM 10099 / NBRC 100826 / MSB8)</name>
    <dbReference type="NCBI Taxonomy" id="243274"/>
    <lineage>
        <taxon>Bacteria</taxon>
        <taxon>Thermotogati</taxon>
        <taxon>Thermotogota</taxon>
        <taxon>Thermotogae</taxon>
        <taxon>Thermotogales</taxon>
        <taxon>Thermotogaceae</taxon>
        <taxon>Thermotoga</taxon>
    </lineage>
</organism>
<evidence type="ECO:0000255" key="1">
    <source>
        <dbReference type="HAMAP-Rule" id="MF_01402"/>
    </source>
</evidence>
<accession>Q9X295</accession>
<proteinExistence type="inferred from homology"/>
<gene>
    <name evidence="1" type="primary">apgM</name>
    <name type="ordered locus">TM_1774</name>
</gene>
<keyword id="KW-0324">Glycolysis</keyword>
<keyword id="KW-0413">Isomerase</keyword>
<keyword id="KW-1185">Reference proteome</keyword>
<feature type="chain" id="PRO_0000138155" description="Probable 2,3-bisphosphoglycerate-independent phosphoglycerate mutase">
    <location>
        <begin position="1"/>
        <end position="401"/>
    </location>
</feature>